<sequence>MMNRAYSLRNSRAPTASQLLNPPPPSSSTRSGRLFAPLSHTMRINHAATFTPDLAKRLAVLVKMEKNVMRSMEVTIRGRRDCARQLSYWGEDCDDDISDVTDKLGVLFYEMAELENYLIDRYDQYRMTLKSIRNIESSVQPSREKKQKLLDQIYALKHKDPESPRLVTMEQELVREEAACLVAEAQLSNTTREKFKQAMTFNLDALHEHAEKLNLIATYGRHLLNLIDDTPVTPGEARPAYDGYETSRQIVMDAEHALSSWVPSQPAVNFVKPQIEDDAQSDARSWNEYEAQGEPVPVEQVTHLQDDVQSDTSEIIENEPGMHPHVHAERMSRIASESSDAVPQQTAVQVA</sequence>
<proteinExistence type="evidence at protein level"/>
<evidence type="ECO:0000250" key="1">
    <source>
        <dbReference type="UniProtKB" id="P53252"/>
    </source>
</evidence>
<evidence type="ECO:0000256" key="2">
    <source>
        <dbReference type="SAM" id="MobiDB-lite"/>
    </source>
</evidence>
<evidence type="ECO:0000269" key="3">
    <source>
    </source>
</evidence>
<evidence type="ECO:0000305" key="4"/>
<evidence type="ECO:0000312" key="5">
    <source>
        <dbReference type="EMBL" id="CAA19279.1"/>
    </source>
</evidence>
<protein>
    <recommendedName>
        <fullName>Probable sphingolipid long chain base-responsive protein pil1</fullName>
    </recommendedName>
    <alternativeName>
        <fullName>Protein kinase inhibitor pil1</fullName>
    </alternativeName>
</protein>
<gene>
    <name type="primary">pil1</name>
    <name type="ORF">SPCC736.15</name>
</gene>
<reference evidence="5" key="1">
    <citation type="journal article" date="2002" name="Nature">
        <title>The genome sequence of Schizosaccharomyces pombe.</title>
        <authorList>
            <person name="Wood V."/>
            <person name="Gwilliam R."/>
            <person name="Rajandream M.A."/>
            <person name="Lyne M.H."/>
            <person name="Lyne R."/>
            <person name="Stewart A."/>
            <person name="Sgouros J.G."/>
            <person name="Peat N."/>
            <person name="Hayles J."/>
            <person name="Baker S.G."/>
            <person name="Basham D."/>
            <person name="Bowman S."/>
            <person name="Brooks K."/>
            <person name="Brown D."/>
            <person name="Brown S."/>
            <person name="Chillingworth T."/>
            <person name="Churcher C.M."/>
            <person name="Collins M."/>
            <person name="Connor R."/>
            <person name="Cronin A."/>
            <person name="Davis P."/>
            <person name="Feltwell T."/>
            <person name="Fraser A."/>
            <person name="Gentles S."/>
            <person name="Goble A."/>
            <person name="Hamlin N."/>
            <person name="Harris D.E."/>
            <person name="Hidalgo J."/>
            <person name="Hodgson G."/>
            <person name="Holroyd S."/>
            <person name="Hornsby T."/>
            <person name="Howarth S."/>
            <person name="Huckle E.J."/>
            <person name="Hunt S."/>
            <person name="Jagels K."/>
            <person name="James K.D."/>
            <person name="Jones L."/>
            <person name="Jones M."/>
            <person name="Leather S."/>
            <person name="McDonald S."/>
            <person name="McLean J."/>
            <person name="Mooney P."/>
            <person name="Moule S."/>
            <person name="Mungall K.L."/>
            <person name="Murphy L.D."/>
            <person name="Niblett D."/>
            <person name="Odell C."/>
            <person name="Oliver K."/>
            <person name="O'Neil S."/>
            <person name="Pearson D."/>
            <person name="Quail M.A."/>
            <person name="Rabbinowitsch E."/>
            <person name="Rutherford K.M."/>
            <person name="Rutter S."/>
            <person name="Saunders D."/>
            <person name="Seeger K."/>
            <person name="Sharp S."/>
            <person name="Skelton J."/>
            <person name="Simmonds M.N."/>
            <person name="Squares R."/>
            <person name="Squares S."/>
            <person name="Stevens K."/>
            <person name="Taylor K."/>
            <person name="Taylor R.G."/>
            <person name="Tivey A."/>
            <person name="Walsh S.V."/>
            <person name="Warren T."/>
            <person name="Whitehead S."/>
            <person name="Woodward J.R."/>
            <person name="Volckaert G."/>
            <person name="Aert R."/>
            <person name="Robben J."/>
            <person name="Grymonprez B."/>
            <person name="Weltjens I."/>
            <person name="Vanstreels E."/>
            <person name="Rieger M."/>
            <person name="Schaefer M."/>
            <person name="Mueller-Auer S."/>
            <person name="Gabel C."/>
            <person name="Fuchs M."/>
            <person name="Duesterhoeft A."/>
            <person name="Fritzc C."/>
            <person name="Holzer E."/>
            <person name="Moestl D."/>
            <person name="Hilbert H."/>
            <person name="Borzym K."/>
            <person name="Langer I."/>
            <person name="Beck A."/>
            <person name="Lehrach H."/>
            <person name="Reinhardt R."/>
            <person name="Pohl T.M."/>
            <person name="Eger P."/>
            <person name="Zimmermann W."/>
            <person name="Wedler H."/>
            <person name="Wambutt R."/>
            <person name="Purnelle B."/>
            <person name="Goffeau A."/>
            <person name="Cadieu E."/>
            <person name="Dreano S."/>
            <person name="Gloux S."/>
            <person name="Lelaure V."/>
            <person name="Mottier S."/>
            <person name="Galibert F."/>
            <person name="Aves S.J."/>
            <person name="Xiang Z."/>
            <person name="Hunt C."/>
            <person name="Moore K."/>
            <person name="Hurst S.M."/>
            <person name="Lucas M."/>
            <person name="Rochet M."/>
            <person name="Gaillardin C."/>
            <person name="Tallada V.A."/>
            <person name="Garzon A."/>
            <person name="Thode G."/>
            <person name="Daga R.R."/>
            <person name="Cruzado L."/>
            <person name="Jimenez J."/>
            <person name="Sanchez M."/>
            <person name="del Rey F."/>
            <person name="Benito J."/>
            <person name="Dominguez A."/>
            <person name="Revuelta J.L."/>
            <person name="Moreno S."/>
            <person name="Armstrong J."/>
            <person name="Forsburg S.L."/>
            <person name="Cerutti L."/>
            <person name="Lowe T."/>
            <person name="McCombie W.R."/>
            <person name="Paulsen I."/>
            <person name="Potashkin J."/>
            <person name="Shpakovski G.V."/>
            <person name="Ussery D."/>
            <person name="Barrell B.G."/>
            <person name="Nurse P."/>
        </authorList>
    </citation>
    <scope>NUCLEOTIDE SEQUENCE [LARGE SCALE GENOMIC DNA]</scope>
    <source>
        <strain>972 / ATCC 24843</strain>
    </source>
</reference>
<reference key="2">
    <citation type="journal article" date="2008" name="J. Proteome Res.">
        <title>Phosphoproteome analysis of fission yeast.</title>
        <authorList>
            <person name="Wilson-Grady J.T."/>
            <person name="Villen J."/>
            <person name="Gygi S.P."/>
        </authorList>
    </citation>
    <scope>PHOSPHORYLATION [LARGE SCALE ANALYSIS] AT SER-11; THR-15; SER-17; SER-39; THR-230 AND THR-233</scope>
    <scope>IDENTIFICATION BY MASS SPECTROMETRY</scope>
</reference>
<organism>
    <name type="scientific">Schizosaccharomyces pombe (strain 972 / ATCC 24843)</name>
    <name type="common">Fission yeast</name>
    <dbReference type="NCBI Taxonomy" id="284812"/>
    <lineage>
        <taxon>Eukaryota</taxon>
        <taxon>Fungi</taxon>
        <taxon>Dikarya</taxon>
        <taxon>Ascomycota</taxon>
        <taxon>Taphrinomycotina</taxon>
        <taxon>Schizosaccharomycetes</taxon>
        <taxon>Schizosaccharomycetales</taxon>
        <taxon>Schizosaccharomycetaceae</taxon>
        <taxon>Schizosaccharomyces</taxon>
    </lineage>
</organism>
<accession>O74960</accession>
<keyword id="KW-0597">Phosphoprotein</keyword>
<keyword id="KW-1185">Reference proteome</keyword>
<feature type="chain" id="PRO_0000308182" description="Probable sphingolipid long chain base-responsive protein pil1">
    <location>
        <begin position="1"/>
        <end position="351"/>
    </location>
</feature>
<feature type="region of interest" description="Disordered" evidence="2">
    <location>
        <begin position="1"/>
        <end position="33"/>
    </location>
</feature>
<feature type="region of interest" description="Disordered" evidence="2">
    <location>
        <begin position="318"/>
        <end position="351"/>
    </location>
</feature>
<feature type="compositionally biased region" description="Polar residues" evidence="2">
    <location>
        <begin position="8"/>
        <end position="20"/>
    </location>
</feature>
<feature type="compositionally biased region" description="Basic and acidic residues" evidence="2">
    <location>
        <begin position="320"/>
        <end position="332"/>
    </location>
</feature>
<feature type="compositionally biased region" description="Polar residues" evidence="2">
    <location>
        <begin position="335"/>
        <end position="351"/>
    </location>
</feature>
<feature type="modified residue" description="Phosphoserine" evidence="3">
    <location>
        <position position="11"/>
    </location>
</feature>
<feature type="modified residue" description="Phosphothreonine" evidence="3">
    <location>
        <position position="15"/>
    </location>
</feature>
<feature type="modified residue" description="Phosphoserine" evidence="3">
    <location>
        <position position="17"/>
    </location>
</feature>
<feature type="modified residue" description="Phosphoserine" evidence="3">
    <location>
        <position position="39"/>
    </location>
</feature>
<feature type="modified residue" description="Phosphoserine" evidence="1">
    <location>
        <position position="163"/>
    </location>
</feature>
<feature type="modified residue" description="Phosphothreonine" evidence="3">
    <location>
        <position position="230"/>
    </location>
</feature>
<feature type="modified residue" description="Phosphothreonine" evidence="3">
    <location>
        <position position="233"/>
    </location>
</feature>
<name>PIL1_SCHPO</name>
<dbReference type="EMBL" id="CU329672">
    <property type="protein sequence ID" value="CAA19279.1"/>
    <property type="molecule type" value="Genomic_DNA"/>
</dbReference>
<dbReference type="PIR" id="T41572">
    <property type="entry name" value="T41572"/>
</dbReference>
<dbReference type="RefSeq" id="NP_587786.1">
    <property type="nucleotide sequence ID" value="NM_001022779.2"/>
</dbReference>
<dbReference type="SMR" id="O74960"/>
<dbReference type="BioGRID" id="275665">
    <property type="interactions" value="26"/>
</dbReference>
<dbReference type="FunCoup" id="O74960">
    <property type="interactions" value="21"/>
</dbReference>
<dbReference type="STRING" id="284812.O74960"/>
<dbReference type="iPTMnet" id="O74960"/>
<dbReference type="PaxDb" id="4896-SPCC736.15.1"/>
<dbReference type="EnsemblFungi" id="SPCC736.15.1">
    <property type="protein sequence ID" value="SPCC736.15.1:pep"/>
    <property type="gene ID" value="SPCC736.15"/>
</dbReference>
<dbReference type="GeneID" id="2539093"/>
<dbReference type="KEGG" id="spo:2539093"/>
<dbReference type="PomBase" id="SPCC736.15">
    <property type="gene designation" value="pil1"/>
</dbReference>
<dbReference type="VEuPathDB" id="FungiDB:SPCC736.15"/>
<dbReference type="eggNOG" id="ENOG502QQ1T">
    <property type="taxonomic scope" value="Eukaryota"/>
</dbReference>
<dbReference type="HOGENOM" id="CLU_046464_0_0_1"/>
<dbReference type="InParanoid" id="O74960"/>
<dbReference type="OMA" id="NRWLGKG"/>
<dbReference type="PhylomeDB" id="O74960"/>
<dbReference type="PRO" id="PR:O74960"/>
<dbReference type="Proteomes" id="UP000002485">
    <property type="component" value="Chromosome III"/>
</dbReference>
<dbReference type="GO" id="GO:0036362">
    <property type="term" value="C:ascus membrane"/>
    <property type="evidence" value="ECO:0000314"/>
    <property type="project" value="PomBase"/>
</dbReference>
<dbReference type="GO" id="GO:0032126">
    <property type="term" value="C:eisosome"/>
    <property type="evidence" value="ECO:0000314"/>
    <property type="project" value="PomBase"/>
</dbReference>
<dbReference type="GO" id="GO:0036286">
    <property type="term" value="C:eisosome filament"/>
    <property type="evidence" value="ECO:0000314"/>
    <property type="project" value="PomBase"/>
</dbReference>
<dbReference type="GO" id="GO:0005886">
    <property type="term" value="C:plasma membrane"/>
    <property type="evidence" value="ECO:0000318"/>
    <property type="project" value="GO_Central"/>
</dbReference>
<dbReference type="GO" id="GO:0008289">
    <property type="term" value="F:lipid binding"/>
    <property type="evidence" value="ECO:0000318"/>
    <property type="project" value="GO_Central"/>
</dbReference>
<dbReference type="GO" id="GO:0070941">
    <property type="term" value="P:eisosome assembly"/>
    <property type="evidence" value="ECO:0000314"/>
    <property type="project" value="PomBase"/>
</dbReference>
<dbReference type="GO" id="GO:0006897">
    <property type="term" value="P:endocytosis"/>
    <property type="evidence" value="ECO:0000318"/>
    <property type="project" value="GO_Central"/>
</dbReference>
<dbReference type="GO" id="GO:0061817">
    <property type="term" value="P:endoplasmic reticulum-plasma membrane tethering"/>
    <property type="evidence" value="ECO:0000315"/>
    <property type="project" value="PomBase"/>
</dbReference>
<dbReference type="FunFam" id="1.20.1270.60:FF:000005">
    <property type="entry name" value="Sphingolipid long chain base-responsive pil1"/>
    <property type="match status" value="1"/>
</dbReference>
<dbReference type="Gene3D" id="1.20.1270.60">
    <property type="entry name" value="Arfaptin homology (AH) domain/BAR domain"/>
    <property type="match status" value="1"/>
</dbReference>
<dbReference type="InterPro" id="IPR027267">
    <property type="entry name" value="AH/BAR_dom_sf"/>
</dbReference>
<dbReference type="InterPro" id="IPR028245">
    <property type="entry name" value="PIL1/LSP1"/>
</dbReference>
<dbReference type="PANTHER" id="PTHR31962">
    <property type="entry name" value="SPHINGOLIPID LONG CHAIN BASE-RESPONSIVE PROTEIN PIL1"/>
    <property type="match status" value="1"/>
</dbReference>
<dbReference type="PANTHER" id="PTHR31962:SF1">
    <property type="entry name" value="SPHINGOLIPID LONG CHAIN BASE-RESPONSIVE PROTEIN PIL1"/>
    <property type="match status" value="1"/>
</dbReference>
<dbReference type="Pfam" id="PF13805">
    <property type="entry name" value="Pil1"/>
    <property type="match status" value="1"/>
</dbReference>
<comment type="function">
    <text evidence="1">Negative regulator of cell wall integrity (CWI) in unstressed cells, probably by inhibiting protein kinase ksg1/ppk21 activity and regulating their downstream CWI pathways pck2-MAP kinase pathway and protein kinase gad8 pathway. Activity may be regulated by the transient increase of sphingolipid long chain bases (LCBs) during heat stress (By similarity).</text>
</comment>
<comment type="PTM">
    <text evidence="1 4">Phosphorylated by ksg1 and ppk21. Phosphorylation is regulated by sphingolipid long chain bases (LCBs) (By similarity).</text>
</comment>